<protein>
    <recommendedName>
        <fullName>Protein FEV</fullName>
    </recommendedName>
    <alternativeName>
        <fullName>Fifth Ewing variant protein</fullName>
    </alternativeName>
    <alternativeName>
        <fullName>PC12 ETS domain-containing transcription factor 1</fullName>
        <shortName>PC12 ETS factor 1</shortName>
        <shortName>Pet-1</shortName>
    </alternativeName>
</protein>
<sequence length="238" mass="25030">MRQSGASQPLLINMYLPDPVGDGLFKDGKNPSWGPLSPAVQKGSGQIQLWQFLLELLADRANAGCIAWEGGHGEFKLTDPDEVARRWGERKSKPNMNYDKLSRALRYYYDKNIMSKVHGKRYAYRFDFQGLAQACQPPPAHAHAAAAAAAAAAAAQDGALYKLPAGLAPLPFPGLSKLNLMAASAGVAPAGFSYWPGPGPAATAAAATAALYPSPSLQPPPGPFGAVAAASHLGGHYH</sequence>
<comment type="function">
    <text evidence="2">Functions as a transcriptional regulator. According to PubMed:12761502, it functions as a transcriptional repressor. Functions in the differentiation and the maintenance of the central serotonergic neurons. May play a role in cell growth.</text>
</comment>
<comment type="subcellular location">
    <subcellularLocation>
        <location evidence="1 2">Nucleus</location>
    </subcellularLocation>
</comment>
<comment type="tissue specificity">
    <text evidence="3 4 6">In brain, exclusively expressed in the major serotonergic neurons of the dorsal and median raphe nuclei located in the midbrain and pons. Also detected in prostate and small intestine.</text>
</comment>
<comment type="disease" evidence="5">
    <disease id="DI-01096">
        <name>Sudden infant death syndrome</name>
        <acronym>SIDS</acronym>
        <description>SIDS is the sudden death of an infant younger than 1 year that remains unexplained after a thorough case investigation, including performance of a complete autopsy, examination of the death scene, and review of clinical history. Pathophysiologic mechanisms for SIDS may include respiratory dysfunction, cardiac dysrhythmias, cardiorespiratory instability, and inborn errors of metabolism, but definitive pathogenic mechanisms precipitating an infant sudden death remain elusive.</description>
        <dbReference type="MIM" id="272120"/>
    </disease>
    <text>Disease susceptibility may be associated with variants affecting the gene represented in this entry.</text>
</comment>
<comment type="disease">
    <text evidence="6">A chromosomal aberration involving FEV is found in Ewing tumors. Translocation t(2;21;22)(q23;q22;q12) that forms a EWSR1-FEV fusion protein with a potential oncogenic activity.</text>
</comment>
<comment type="similarity">
    <text evidence="7">Belongs to the ETS family.</text>
</comment>
<organism>
    <name type="scientific">Homo sapiens</name>
    <name type="common">Human</name>
    <dbReference type="NCBI Taxonomy" id="9606"/>
    <lineage>
        <taxon>Eukaryota</taxon>
        <taxon>Metazoa</taxon>
        <taxon>Chordata</taxon>
        <taxon>Craniata</taxon>
        <taxon>Vertebrata</taxon>
        <taxon>Euteleostomi</taxon>
        <taxon>Mammalia</taxon>
        <taxon>Eutheria</taxon>
        <taxon>Euarchontoglires</taxon>
        <taxon>Primates</taxon>
        <taxon>Haplorrhini</taxon>
        <taxon>Catarrhini</taxon>
        <taxon>Hominidae</taxon>
        <taxon>Homo</taxon>
    </lineage>
</organism>
<dbReference type="EMBL" id="Y08976">
    <property type="protein sequence ID" value="CAA70169.1"/>
    <property type="molecule type" value="mRNA"/>
</dbReference>
<dbReference type="EMBL" id="AC097468">
    <property type="protein sequence ID" value="AAX88917.1"/>
    <property type="molecule type" value="Genomic_DNA"/>
</dbReference>
<dbReference type="EMBL" id="CH471063">
    <property type="protein sequence ID" value="EAW70664.1"/>
    <property type="molecule type" value="Genomic_DNA"/>
</dbReference>
<dbReference type="EMBL" id="BC023511">
    <property type="protein sequence ID" value="AAH23511.1"/>
    <property type="molecule type" value="mRNA"/>
</dbReference>
<dbReference type="CCDS" id="CCDS2428.1"/>
<dbReference type="RefSeq" id="NP_059991.1">
    <property type="nucleotide sequence ID" value="NM_017521.3"/>
</dbReference>
<dbReference type="PDB" id="2YPR">
    <property type="method" value="X-ray"/>
    <property type="resolution" value="2.64 A"/>
    <property type="chains" value="A/B=42-141"/>
</dbReference>
<dbReference type="PDB" id="3ZP5">
    <property type="method" value="X-ray"/>
    <property type="resolution" value="2.00 A"/>
    <property type="chains" value="A=42-141"/>
</dbReference>
<dbReference type="PDBsum" id="2YPR"/>
<dbReference type="PDBsum" id="3ZP5"/>
<dbReference type="SMR" id="Q99581"/>
<dbReference type="BioGRID" id="120120">
    <property type="interactions" value="202"/>
</dbReference>
<dbReference type="FunCoup" id="Q99581">
    <property type="interactions" value="825"/>
</dbReference>
<dbReference type="IntAct" id="Q99581">
    <property type="interactions" value="201"/>
</dbReference>
<dbReference type="STRING" id="9606.ENSP00000295727"/>
<dbReference type="iPTMnet" id="Q99581"/>
<dbReference type="PhosphoSitePlus" id="Q99581"/>
<dbReference type="BioMuta" id="FEV"/>
<dbReference type="DMDM" id="74762701"/>
<dbReference type="MassIVE" id="Q99581"/>
<dbReference type="PaxDb" id="9606-ENSP00000295727"/>
<dbReference type="PeptideAtlas" id="Q99581"/>
<dbReference type="ProteomicsDB" id="78340"/>
<dbReference type="Antibodypedia" id="34294">
    <property type="antibodies" value="113 antibodies from 26 providers"/>
</dbReference>
<dbReference type="DNASU" id="54738"/>
<dbReference type="Ensembl" id="ENST00000295727.2">
    <property type="protein sequence ID" value="ENSP00000295727.1"/>
    <property type="gene ID" value="ENSG00000163497.3"/>
</dbReference>
<dbReference type="GeneID" id="54738"/>
<dbReference type="KEGG" id="hsa:54738"/>
<dbReference type="MANE-Select" id="ENST00000295727.2">
    <property type="protein sequence ID" value="ENSP00000295727.1"/>
    <property type="RefSeq nucleotide sequence ID" value="NM_017521.3"/>
    <property type="RefSeq protein sequence ID" value="NP_059991.1"/>
</dbReference>
<dbReference type="UCSC" id="uc002vji.1">
    <property type="organism name" value="human"/>
</dbReference>
<dbReference type="AGR" id="HGNC:18562"/>
<dbReference type="CTD" id="54738"/>
<dbReference type="DisGeNET" id="54738"/>
<dbReference type="GeneCards" id="FEV"/>
<dbReference type="HGNC" id="HGNC:18562">
    <property type="gene designation" value="FEV"/>
</dbReference>
<dbReference type="HPA" id="ENSG00000163497">
    <property type="expression patterns" value="Tissue enhanced (adrenal gland, intestine, pituitary gland, prostate, stomach)"/>
</dbReference>
<dbReference type="MalaCards" id="FEV"/>
<dbReference type="MIM" id="272120">
    <property type="type" value="phenotype"/>
</dbReference>
<dbReference type="MIM" id="607150">
    <property type="type" value="gene"/>
</dbReference>
<dbReference type="neXtProt" id="NX_Q99581"/>
<dbReference type="OpenTargets" id="ENSG00000163497"/>
<dbReference type="PharmGKB" id="PA134875093"/>
<dbReference type="VEuPathDB" id="HostDB:ENSG00000163497"/>
<dbReference type="eggNOG" id="KOG3806">
    <property type="taxonomic scope" value="Eukaryota"/>
</dbReference>
<dbReference type="GeneTree" id="ENSGT00940000161562"/>
<dbReference type="HOGENOM" id="CLU_045216_4_0_1"/>
<dbReference type="InParanoid" id="Q99581"/>
<dbReference type="OMA" id="GFSYWAG"/>
<dbReference type="OrthoDB" id="10067219at2759"/>
<dbReference type="PAN-GO" id="Q99581">
    <property type="GO annotations" value="4 GO annotations based on evolutionary models"/>
</dbReference>
<dbReference type="PhylomeDB" id="Q99581"/>
<dbReference type="TreeFam" id="TF316214"/>
<dbReference type="PathwayCommons" id="Q99581"/>
<dbReference type="SignaLink" id="Q99581"/>
<dbReference type="SIGNOR" id="Q99581"/>
<dbReference type="BioGRID-ORCS" id="54738">
    <property type="hits" value="18 hits in 1167 CRISPR screens"/>
</dbReference>
<dbReference type="EvolutionaryTrace" id="Q99581"/>
<dbReference type="GenomeRNAi" id="54738"/>
<dbReference type="Pharos" id="Q99581">
    <property type="development level" value="Tbio"/>
</dbReference>
<dbReference type="PRO" id="PR:Q99581"/>
<dbReference type="Proteomes" id="UP000005640">
    <property type="component" value="Chromosome 2"/>
</dbReference>
<dbReference type="RNAct" id="Q99581">
    <property type="molecule type" value="protein"/>
</dbReference>
<dbReference type="Bgee" id="ENSG00000163497">
    <property type="expression patterns" value="Expressed in primordial germ cell in gonad and 71 other cell types or tissues"/>
</dbReference>
<dbReference type="GO" id="GO:0000785">
    <property type="term" value="C:chromatin"/>
    <property type="evidence" value="ECO:0000247"/>
    <property type="project" value="NTNU_SB"/>
</dbReference>
<dbReference type="GO" id="GO:0016607">
    <property type="term" value="C:nuclear speck"/>
    <property type="evidence" value="ECO:0000314"/>
    <property type="project" value="HPA"/>
</dbReference>
<dbReference type="GO" id="GO:0005634">
    <property type="term" value="C:nucleus"/>
    <property type="evidence" value="ECO:0000318"/>
    <property type="project" value="GO_Central"/>
</dbReference>
<dbReference type="GO" id="GO:0001228">
    <property type="term" value="F:DNA-binding transcription activator activity, RNA polymerase II-specific"/>
    <property type="evidence" value="ECO:0007669"/>
    <property type="project" value="Ensembl"/>
</dbReference>
<dbReference type="GO" id="GO:0000981">
    <property type="term" value="F:DNA-binding transcription factor activity, RNA polymerase II-specific"/>
    <property type="evidence" value="ECO:0000247"/>
    <property type="project" value="NTNU_SB"/>
</dbReference>
<dbReference type="GO" id="GO:0000978">
    <property type="term" value="F:RNA polymerase II cis-regulatory region sequence-specific DNA binding"/>
    <property type="evidence" value="ECO:0007669"/>
    <property type="project" value="Ensembl"/>
</dbReference>
<dbReference type="GO" id="GO:1990837">
    <property type="term" value="F:sequence-specific double-stranded DNA binding"/>
    <property type="evidence" value="ECO:0000314"/>
    <property type="project" value="ARUK-UCL"/>
</dbReference>
<dbReference type="GO" id="GO:0030154">
    <property type="term" value="P:cell differentiation"/>
    <property type="evidence" value="ECO:0000318"/>
    <property type="project" value="GO_Central"/>
</dbReference>
<dbReference type="GO" id="GO:0042711">
    <property type="term" value="P:maternal behavior"/>
    <property type="evidence" value="ECO:0007669"/>
    <property type="project" value="Ensembl"/>
</dbReference>
<dbReference type="GO" id="GO:0048665">
    <property type="term" value="P:neuron fate specification"/>
    <property type="evidence" value="ECO:0007669"/>
    <property type="project" value="Ensembl"/>
</dbReference>
<dbReference type="GO" id="GO:0042551">
    <property type="term" value="P:neuron maturation"/>
    <property type="evidence" value="ECO:0007669"/>
    <property type="project" value="Ensembl"/>
</dbReference>
<dbReference type="GO" id="GO:0010628">
    <property type="term" value="P:positive regulation of gene expression"/>
    <property type="evidence" value="ECO:0007669"/>
    <property type="project" value="Ensembl"/>
</dbReference>
<dbReference type="GO" id="GO:0006357">
    <property type="term" value="P:regulation of transcription by RNA polymerase II"/>
    <property type="evidence" value="ECO:0000318"/>
    <property type="project" value="GO_Central"/>
</dbReference>
<dbReference type="FunFam" id="1.10.10.10:FF:000392">
    <property type="entry name" value="FEV, ETS transcription factor"/>
    <property type="match status" value="1"/>
</dbReference>
<dbReference type="Gene3D" id="1.10.10.10">
    <property type="entry name" value="Winged helix-like DNA-binding domain superfamily/Winged helix DNA-binding domain"/>
    <property type="match status" value="1"/>
</dbReference>
<dbReference type="InterPro" id="IPR000418">
    <property type="entry name" value="Ets_dom"/>
</dbReference>
<dbReference type="InterPro" id="IPR046328">
    <property type="entry name" value="ETS_fam"/>
</dbReference>
<dbReference type="InterPro" id="IPR036388">
    <property type="entry name" value="WH-like_DNA-bd_sf"/>
</dbReference>
<dbReference type="InterPro" id="IPR036390">
    <property type="entry name" value="WH_DNA-bd_sf"/>
</dbReference>
<dbReference type="PANTHER" id="PTHR11849">
    <property type="entry name" value="ETS"/>
    <property type="match status" value="1"/>
</dbReference>
<dbReference type="PANTHER" id="PTHR11849:SF203">
    <property type="entry name" value="PROTEIN FEV"/>
    <property type="match status" value="1"/>
</dbReference>
<dbReference type="Pfam" id="PF00178">
    <property type="entry name" value="Ets"/>
    <property type="match status" value="1"/>
</dbReference>
<dbReference type="PRINTS" id="PR00454">
    <property type="entry name" value="ETSDOMAIN"/>
</dbReference>
<dbReference type="SMART" id="SM00413">
    <property type="entry name" value="ETS"/>
    <property type="match status" value="1"/>
</dbReference>
<dbReference type="SUPFAM" id="SSF46785">
    <property type="entry name" value="Winged helix' DNA-binding domain"/>
    <property type="match status" value="1"/>
</dbReference>
<dbReference type="PROSITE" id="PS00345">
    <property type="entry name" value="ETS_DOMAIN_1"/>
    <property type="match status" value="1"/>
</dbReference>
<dbReference type="PROSITE" id="PS00346">
    <property type="entry name" value="ETS_DOMAIN_2"/>
    <property type="match status" value="1"/>
</dbReference>
<dbReference type="PROSITE" id="PS50061">
    <property type="entry name" value="ETS_DOMAIN_3"/>
    <property type="match status" value="1"/>
</dbReference>
<feature type="chain" id="PRO_0000344204" description="Protein FEV">
    <location>
        <begin position="1"/>
        <end position="238"/>
    </location>
</feature>
<feature type="DNA-binding region" description="ETS" evidence="1">
    <location>
        <begin position="47"/>
        <end position="127"/>
    </location>
</feature>
<feature type="region of interest" description="May mediate active transcriptional repression">
    <location>
        <begin position="129"/>
        <end position="238"/>
    </location>
</feature>
<feature type="site" description="Breakpoint for insertion to form EWS-FEV fusion protein">
    <location>
        <begin position="18"/>
        <end position="19"/>
    </location>
</feature>
<feature type="helix" evidence="8">
    <location>
        <begin position="49"/>
        <end position="57"/>
    </location>
</feature>
<feature type="helix" evidence="8">
    <location>
        <begin position="60"/>
        <end position="62"/>
    </location>
</feature>
<feature type="turn" evidence="8">
    <location>
        <begin position="63"/>
        <end position="65"/>
    </location>
</feature>
<feature type="strand" evidence="8">
    <location>
        <begin position="67"/>
        <end position="71"/>
    </location>
</feature>
<feature type="strand" evidence="8">
    <location>
        <begin position="74"/>
        <end position="76"/>
    </location>
</feature>
<feature type="helix" evidence="8">
    <location>
        <begin position="80"/>
        <end position="91"/>
    </location>
</feature>
<feature type="helix" evidence="8">
    <location>
        <begin position="98"/>
        <end position="107"/>
    </location>
</feature>
<feature type="turn" evidence="8">
    <location>
        <begin position="108"/>
        <end position="112"/>
    </location>
</feature>
<feature type="strand" evidence="8">
    <location>
        <begin position="113"/>
        <end position="116"/>
    </location>
</feature>
<feature type="strand" evidence="8">
    <location>
        <begin position="123"/>
        <end position="126"/>
    </location>
</feature>
<feature type="helix" evidence="8">
    <location>
        <begin position="128"/>
        <end position="134"/>
    </location>
</feature>
<keyword id="KW-0002">3D-structure</keyword>
<keyword id="KW-0160">Chromosomal rearrangement</keyword>
<keyword id="KW-0217">Developmental protein</keyword>
<keyword id="KW-0221">Differentiation</keyword>
<keyword id="KW-0238">DNA-binding</keyword>
<keyword id="KW-0524">Neurogenesis</keyword>
<keyword id="KW-0539">Nucleus</keyword>
<keyword id="KW-1267">Proteomics identification</keyword>
<keyword id="KW-1185">Reference proteome</keyword>
<keyword id="KW-0804">Transcription</keyword>
<keyword id="KW-0805">Transcription regulation</keyword>
<gene>
    <name type="primary">FEV</name>
    <name type="synonym">PET1</name>
</gene>
<reference key="1">
    <citation type="journal article" date="1997" name="Oncogene">
        <title>A new member of the ETS family fused to EWS in Ewing tumors.</title>
        <authorList>
            <person name="Peter M."/>
            <person name="Couturier J."/>
            <person name="Pacquement H."/>
            <person name="Michon J."/>
            <person name="Thomas G."/>
            <person name="Magdelenat H."/>
            <person name="Delattre O."/>
        </authorList>
    </citation>
    <scope>NUCLEOTIDE SEQUENCE [MRNA]</scope>
    <scope>CHROMOSOMAL TRANSLOCATION WITH EWSR1</scope>
    <scope>TISSUE SPECIFICITY</scope>
</reference>
<reference key="2">
    <citation type="journal article" date="2005" name="Nature">
        <title>Generation and annotation of the DNA sequences of human chromosomes 2 and 4.</title>
        <authorList>
            <person name="Hillier L.W."/>
            <person name="Graves T.A."/>
            <person name="Fulton R.S."/>
            <person name="Fulton L.A."/>
            <person name="Pepin K.H."/>
            <person name="Minx P."/>
            <person name="Wagner-McPherson C."/>
            <person name="Layman D."/>
            <person name="Wylie K."/>
            <person name="Sekhon M."/>
            <person name="Becker M.C."/>
            <person name="Fewell G.A."/>
            <person name="Delehaunty K.D."/>
            <person name="Miner T.L."/>
            <person name="Nash W.E."/>
            <person name="Kremitzki C."/>
            <person name="Oddy L."/>
            <person name="Du H."/>
            <person name="Sun H."/>
            <person name="Bradshaw-Cordum H."/>
            <person name="Ali J."/>
            <person name="Carter J."/>
            <person name="Cordes M."/>
            <person name="Harris A."/>
            <person name="Isak A."/>
            <person name="van Brunt A."/>
            <person name="Nguyen C."/>
            <person name="Du F."/>
            <person name="Courtney L."/>
            <person name="Kalicki J."/>
            <person name="Ozersky P."/>
            <person name="Abbott S."/>
            <person name="Armstrong J."/>
            <person name="Belter E.A."/>
            <person name="Caruso L."/>
            <person name="Cedroni M."/>
            <person name="Cotton M."/>
            <person name="Davidson T."/>
            <person name="Desai A."/>
            <person name="Elliott G."/>
            <person name="Erb T."/>
            <person name="Fronick C."/>
            <person name="Gaige T."/>
            <person name="Haakenson W."/>
            <person name="Haglund K."/>
            <person name="Holmes A."/>
            <person name="Harkins R."/>
            <person name="Kim K."/>
            <person name="Kruchowski S.S."/>
            <person name="Strong C.M."/>
            <person name="Grewal N."/>
            <person name="Goyea E."/>
            <person name="Hou S."/>
            <person name="Levy A."/>
            <person name="Martinka S."/>
            <person name="Mead K."/>
            <person name="McLellan M.D."/>
            <person name="Meyer R."/>
            <person name="Randall-Maher J."/>
            <person name="Tomlinson C."/>
            <person name="Dauphin-Kohlberg S."/>
            <person name="Kozlowicz-Reilly A."/>
            <person name="Shah N."/>
            <person name="Swearengen-Shahid S."/>
            <person name="Snider J."/>
            <person name="Strong J.T."/>
            <person name="Thompson J."/>
            <person name="Yoakum M."/>
            <person name="Leonard S."/>
            <person name="Pearman C."/>
            <person name="Trani L."/>
            <person name="Radionenko M."/>
            <person name="Waligorski J.E."/>
            <person name="Wang C."/>
            <person name="Rock S.M."/>
            <person name="Tin-Wollam A.-M."/>
            <person name="Maupin R."/>
            <person name="Latreille P."/>
            <person name="Wendl M.C."/>
            <person name="Yang S.-P."/>
            <person name="Pohl C."/>
            <person name="Wallis J.W."/>
            <person name="Spieth J."/>
            <person name="Bieri T.A."/>
            <person name="Berkowicz N."/>
            <person name="Nelson J.O."/>
            <person name="Osborne J."/>
            <person name="Ding L."/>
            <person name="Meyer R."/>
            <person name="Sabo A."/>
            <person name="Shotland Y."/>
            <person name="Sinha P."/>
            <person name="Wohldmann P.E."/>
            <person name="Cook L.L."/>
            <person name="Hickenbotham M.T."/>
            <person name="Eldred J."/>
            <person name="Williams D."/>
            <person name="Jones T.A."/>
            <person name="She X."/>
            <person name="Ciccarelli F.D."/>
            <person name="Izaurralde E."/>
            <person name="Taylor J."/>
            <person name="Schmutz J."/>
            <person name="Myers R.M."/>
            <person name="Cox D.R."/>
            <person name="Huang X."/>
            <person name="McPherson J.D."/>
            <person name="Mardis E.R."/>
            <person name="Clifton S.W."/>
            <person name="Warren W.C."/>
            <person name="Chinwalla A.T."/>
            <person name="Eddy S.R."/>
            <person name="Marra M.A."/>
            <person name="Ovcharenko I."/>
            <person name="Furey T.S."/>
            <person name="Miller W."/>
            <person name="Eichler E.E."/>
            <person name="Bork P."/>
            <person name="Suyama M."/>
            <person name="Torrents D."/>
            <person name="Waterston R.H."/>
            <person name="Wilson R.K."/>
        </authorList>
    </citation>
    <scope>NUCLEOTIDE SEQUENCE [LARGE SCALE GENOMIC DNA]</scope>
</reference>
<reference key="3">
    <citation type="submission" date="2005-07" db="EMBL/GenBank/DDBJ databases">
        <authorList>
            <person name="Mural R.J."/>
            <person name="Istrail S."/>
            <person name="Sutton G.G."/>
            <person name="Florea L."/>
            <person name="Halpern A.L."/>
            <person name="Mobarry C.M."/>
            <person name="Lippert R."/>
            <person name="Walenz B."/>
            <person name="Shatkay H."/>
            <person name="Dew I."/>
            <person name="Miller J.R."/>
            <person name="Flanigan M.J."/>
            <person name="Edwards N.J."/>
            <person name="Bolanos R."/>
            <person name="Fasulo D."/>
            <person name="Halldorsson B.V."/>
            <person name="Hannenhalli S."/>
            <person name="Turner R."/>
            <person name="Yooseph S."/>
            <person name="Lu F."/>
            <person name="Nusskern D.R."/>
            <person name="Shue B.C."/>
            <person name="Zheng X.H."/>
            <person name="Zhong F."/>
            <person name="Delcher A.L."/>
            <person name="Huson D.H."/>
            <person name="Kravitz S.A."/>
            <person name="Mouchard L."/>
            <person name="Reinert K."/>
            <person name="Remington K.A."/>
            <person name="Clark A.G."/>
            <person name="Waterman M.S."/>
            <person name="Eichler E.E."/>
            <person name="Adams M.D."/>
            <person name="Hunkapiller M.W."/>
            <person name="Myers E.W."/>
            <person name="Venter J.C."/>
        </authorList>
    </citation>
    <scope>NUCLEOTIDE SEQUENCE [LARGE SCALE GENOMIC DNA]</scope>
</reference>
<reference key="4">
    <citation type="journal article" date="2004" name="Genome Res.">
        <title>The status, quality, and expansion of the NIH full-length cDNA project: the Mammalian Gene Collection (MGC).</title>
        <authorList>
            <consortium name="The MGC Project Team"/>
        </authorList>
    </citation>
    <scope>NUCLEOTIDE SEQUENCE [LARGE SCALE MRNA]</scope>
    <source>
        <tissue>Brain</tissue>
    </source>
</reference>
<reference key="5">
    <citation type="journal article" date="2003" name="Oncogene">
        <title>FEV acts as a transcriptional repressor through its DNA-binding ETS domain and alanine-rich domain.</title>
        <authorList>
            <person name="Maurer P."/>
            <person name="T'Sas F."/>
            <person name="Coutte L."/>
            <person name="Callens N."/>
            <person name="Brenner C."/>
            <person name="Van Lint C."/>
            <person name="de Launoit Y."/>
            <person name="Baert J.-L."/>
        </authorList>
    </citation>
    <scope>FUNCTION</scope>
    <scope>SUBCELLULAR LOCATION</scope>
</reference>
<reference key="6">
    <citation type="journal article" date="2004" name="Neurosci. Lett.">
        <title>The Ets transcription factor Fev is specifically expressed in the human central serotonergic neurons.</title>
        <authorList>
            <person name="Maurer P."/>
            <person name="Rorive S."/>
            <person name="de Kerchove d'Exaerde A."/>
            <person name="Schiffmann S.N."/>
            <person name="Salmon I."/>
            <person name="de Launoit Y."/>
        </authorList>
    </citation>
    <scope>TISSUE SPECIFICITY</scope>
</reference>
<reference key="7">
    <citation type="journal article" date="2005" name="Synapse">
        <title>Regional distribution and cellular localization of the ETS-domain transcription factor, FEV, mRNA in the human postmortem brain.</title>
        <authorList>
            <person name="Iyo A.H."/>
            <person name="Porter B."/>
            <person name="Deneris E.S."/>
            <person name="Austin M.C."/>
        </authorList>
    </citation>
    <scope>TISSUE SPECIFICITY</scope>
</reference>
<reference key="8">
    <citation type="journal article" date="2006" name="Cell Cycle">
        <title>Expression of EWS-ETS fusions in NIH3T3 cells reveals significant differences to Ewing's sarcoma.</title>
        <authorList>
            <person name="Braunreiter C.L."/>
            <person name="Hancock J.D."/>
            <person name="Coffin C.M."/>
            <person name="Boucher K.M."/>
            <person name="Lessnick S.L."/>
        </authorList>
    </citation>
    <scope>CHARACTERIZATION OF THE EWSR1-FEV FUSION PROTEIN</scope>
</reference>
<reference key="9">
    <citation type="journal article" date="2007" name="Pediatr. Res.">
        <title>Sudden infant death syndrome: rare mutation in the serotonin system FEV gene.</title>
        <authorList>
            <person name="Rand C.M."/>
            <person name="Berry-Kravis E.M."/>
            <person name="Zhou L."/>
            <person name="Fan W."/>
            <person name="Weese-Mayer D.E."/>
        </authorList>
    </citation>
    <scope>INVOLVEMENT IN SIDS</scope>
</reference>
<accession>Q99581</accession>
<name>FEV_HUMAN</name>
<proteinExistence type="evidence at protein level"/>
<evidence type="ECO:0000255" key="1">
    <source>
        <dbReference type="PROSITE-ProRule" id="PRU00237"/>
    </source>
</evidence>
<evidence type="ECO:0000269" key="2">
    <source>
    </source>
</evidence>
<evidence type="ECO:0000269" key="3">
    <source>
    </source>
</evidence>
<evidence type="ECO:0000269" key="4">
    <source>
    </source>
</evidence>
<evidence type="ECO:0000269" key="5">
    <source>
    </source>
</evidence>
<evidence type="ECO:0000269" key="6">
    <source>
    </source>
</evidence>
<evidence type="ECO:0000305" key="7"/>
<evidence type="ECO:0007829" key="8">
    <source>
        <dbReference type="PDB" id="3ZP5"/>
    </source>
</evidence>